<gene>
    <name type="ordered locus">SAR1786</name>
</gene>
<dbReference type="EC" id="3.4.-.-"/>
<dbReference type="EMBL" id="BX571856">
    <property type="protein sequence ID" value="CAG40777.1"/>
    <property type="molecule type" value="Genomic_DNA"/>
</dbReference>
<dbReference type="RefSeq" id="WP_000161659.1">
    <property type="nucleotide sequence ID" value="NC_002952.2"/>
</dbReference>
<dbReference type="SMR" id="Q6GFZ9"/>
<dbReference type="KEGG" id="sar:SAR1786"/>
<dbReference type="HOGENOM" id="CLU_017266_4_2_9"/>
<dbReference type="Proteomes" id="UP000000596">
    <property type="component" value="Chromosome"/>
</dbReference>
<dbReference type="GO" id="GO:0016787">
    <property type="term" value="F:hydrolase activity"/>
    <property type="evidence" value="ECO:0007669"/>
    <property type="project" value="UniProtKB-KW"/>
</dbReference>
<dbReference type="GO" id="GO:0046872">
    <property type="term" value="F:metal ion binding"/>
    <property type="evidence" value="ECO:0007669"/>
    <property type="project" value="UniProtKB-KW"/>
</dbReference>
<dbReference type="CDD" id="cd01092">
    <property type="entry name" value="APP-like"/>
    <property type="match status" value="1"/>
</dbReference>
<dbReference type="FunFam" id="3.90.230.10:FF:000014">
    <property type="entry name" value="Aminopeptidase P family protein"/>
    <property type="match status" value="1"/>
</dbReference>
<dbReference type="Gene3D" id="3.90.230.10">
    <property type="entry name" value="Creatinase/methionine aminopeptidase superfamily"/>
    <property type="match status" value="1"/>
</dbReference>
<dbReference type="Gene3D" id="3.40.350.10">
    <property type="entry name" value="Creatinase/prolidase N-terminal domain"/>
    <property type="match status" value="1"/>
</dbReference>
<dbReference type="InterPro" id="IPR029149">
    <property type="entry name" value="Creatin/AminoP/Spt16_N"/>
</dbReference>
<dbReference type="InterPro" id="IPR036005">
    <property type="entry name" value="Creatinase/aminopeptidase-like"/>
</dbReference>
<dbReference type="InterPro" id="IPR000587">
    <property type="entry name" value="Creatinase_N"/>
</dbReference>
<dbReference type="InterPro" id="IPR000994">
    <property type="entry name" value="Pept_M24"/>
</dbReference>
<dbReference type="InterPro" id="IPR050659">
    <property type="entry name" value="Peptidase_M24B"/>
</dbReference>
<dbReference type="InterPro" id="IPR001131">
    <property type="entry name" value="Peptidase_M24B_aminopep-P_CS"/>
</dbReference>
<dbReference type="PANTHER" id="PTHR46112">
    <property type="entry name" value="AMINOPEPTIDASE"/>
    <property type="match status" value="1"/>
</dbReference>
<dbReference type="PANTHER" id="PTHR46112:SF10">
    <property type="entry name" value="DIPEPTIDASE YKVY-RELATED"/>
    <property type="match status" value="1"/>
</dbReference>
<dbReference type="Pfam" id="PF01321">
    <property type="entry name" value="Creatinase_N"/>
    <property type="match status" value="1"/>
</dbReference>
<dbReference type="Pfam" id="PF00557">
    <property type="entry name" value="Peptidase_M24"/>
    <property type="match status" value="1"/>
</dbReference>
<dbReference type="SUPFAM" id="SSF55920">
    <property type="entry name" value="Creatinase/aminopeptidase"/>
    <property type="match status" value="1"/>
</dbReference>
<dbReference type="SUPFAM" id="SSF53092">
    <property type="entry name" value="Creatinase/prolidase N-terminal domain"/>
    <property type="match status" value="1"/>
</dbReference>
<dbReference type="PROSITE" id="PS00491">
    <property type="entry name" value="PROLINE_PEPTIDASE"/>
    <property type="match status" value="1"/>
</dbReference>
<name>Y1786_STAAR</name>
<comment type="cofactor">
    <cofactor evidence="2">
        <name>Mn(2+)</name>
        <dbReference type="ChEBI" id="CHEBI:29035"/>
    </cofactor>
    <text evidence="2">Binds 2 manganese ions per subunit.</text>
</comment>
<comment type="similarity">
    <text evidence="2">Belongs to the peptidase M24B family.</text>
</comment>
<proteinExistence type="inferred from homology"/>
<evidence type="ECO:0000255" key="1"/>
<evidence type="ECO:0000305" key="2"/>
<protein>
    <recommendedName>
        <fullName>Uncharacterized peptidase SAR1786</fullName>
        <ecNumber>3.4.-.-</ecNumber>
    </recommendedName>
</protein>
<reference key="1">
    <citation type="journal article" date="2004" name="Proc. Natl. Acad. Sci. U.S.A.">
        <title>Complete genomes of two clinical Staphylococcus aureus strains: evidence for the rapid evolution of virulence and drug resistance.</title>
        <authorList>
            <person name="Holden M.T.G."/>
            <person name="Feil E.J."/>
            <person name="Lindsay J.A."/>
            <person name="Peacock S.J."/>
            <person name="Day N.P.J."/>
            <person name="Enright M.C."/>
            <person name="Foster T.J."/>
            <person name="Moore C.E."/>
            <person name="Hurst L."/>
            <person name="Atkin R."/>
            <person name="Barron A."/>
            <person name="Bason N."/>
            <person name="Bentley S.D."/>
            <person name="Chillingworth C."/>
            <person name="Chillingworth T."/>
            <person name="Churcher C."/>
            <person name="Clark L."/>
            <person name="Corton C."/>
            <person name="Cronin A."/>
            <person name="Doggett J."/>
            <person name="Dowd L."/>
            <person name="Feltwell T."/>
            <person name="Hance Z."/>
            <person name="Harris B."/>
            <person name="Hauser H."/>
            <person name="Holroyd S."/>
            <person name="Jagels K."/>
            <person name="James K.D."/>
            <person name="Lennard N."/>
            <person name="Line A."/>
            <person name="Mayes R."/>
            <person name="Moule S."/>
            <person name="Mungall K."/>
            <person name="Ormond D."/>
            <person name="Quail M.A."/>
            <person name="Rabbinowitsch E."/>
            <person name="Rutherford K.M."/>
            <person name="Sanders M."/>
            <person name="Sharp S."/>
            <person name="Simmonds M."/>
            <person name="Stevens K."/>
            <person name="Whitehead S."/>
            <person name="Barrell B.G."/>
            <person name="Spratt B.G."/>
            <person name="Parkhill J."/>
        </authorList>
    </citation>
    <scope>NUCLEOTIDE SEQUENCE [LARGE SCALE GENOMIC DNA]</scope>
    <source>
        <strain>MRSA252</strain>
    </source>
</reference>
<accession>Q6GFZ9</accession>
<feature type="chain" id="PRO_0000299425" description="Uncharacterized peptidase SAR1786">
    <location>
        <begin position="1"/>
        <end position="351"/>
    </location>
</feature>
<feature type="binding site" evidence="1">
    <location>
        <position position="215"/>
    </location>
    <ligand>
        <name>Mn(2+)</name>
        <dbReference type="ChEBI" id="CHEBI:29035"/>
        <label>2</label>
    </ligand>
</feature>
<feature type="binding site" evidence="1">
    <location>
        <position position="226"/>
    </location>
    <ligand>
        <name>Mn(2+)</name>
        <dbReference type="ChEBI" id="CHEBI:29035"/>
        <label>1</label>
    </ligand>
</feature>
<feature type="binding site" evidence="1">
    <location>
        <position position="226"/>
    </location>
    <ligand>
        <name>Mn(2+)</name>
        <dbReference type="ChEBI" id="CHEBI:29035"/>
        <label>2</label>
    </ligand>
</feature>
<feature type="binding site" evidence="1">
    <location>
        <position position="290"/>
    </location>
    <ligand>
        <name>Mn(2+)</name>
        <dbReference type="ChEBI" id="CHEBI:29035"/>
        <label>1</label>
    </ligand>
</feature>
<feature type="binding site" evidence="1">
    <location>
        <position position="319"/>
    </location>
    <ligand>
        <name>Mn(2+)</name>
        <dbReference type="ChEBI" id="CHEBI:29035"/>
        <label>1</label>
    </ligand>
</feature>
<feature type="binding site" evidence="1">
    <location>
        <position position="333"/>
    </location>
    <ligand>
        <name>Mn(2+)</name>
        <dbReference type="ChEBI" id="CHEBI:29035"/>
        <label>1</label>
    </ligand>
</feature>
<feature type="binding site" evidence="1">
    <location>
        <position position="333"/>
    </location>
    <ligand>
        <name>Mn(2+)</name>
        <dbReference type="ChEBI" id="CHEBI:29035"/>
        <label>2</label>
    </ligand>
</feature>
<organism>
    <name type="scientific">Staphylococcus aureus (strain MRSA252)</name>
    <dbReference type="NCBI Taxonomy" id="282458"/>
    <lineage>
        <taxon>Bacteria</taxon>
        <taxon>Bacillati</taxon>
        <taxon>Bacillota</taxon>
        <taxon>Bacilli</taxon>
        <taxon>Bacillales</taxon>
        <taxon>Staphylococcaceae</taxon>
        <taxon>Staphylococcus</taxon>
    </lineage>
</organism>
<sequence>MTKISKIIDELNNQQADAAWITTPLNVYYFTGYRSEPHERLFALLIKKDGKQVLFCPKMEVEEVKASPFTGEIVGYLDTENPFSLYPQTINKLLIESEHLTVARQKQLISGFNVNSFGDVDLTIKQLRNIKSEDEINKIRKAAELADKCIEIGVSYLKESVTEREVVNHIEQTIKQYGVNEMSFDTMVLFGDHAASPHGTPGDRRLKSNEYVLFDLGVIYEHYCSDMTRTIKFGEPSQEAQEIYNIVLEAETSAIQAIKPGIPLKDIDHIARNIISEKGYGEYFPHRLGHGLGLQEHEYQDVSSTNSNLLEAGMVITIEPGIYVPGVAGVRIEDDILVTNEGYEVLTHYEK</sequence>
<keyword id="KW-0378">Hydrolase</keyword>
<keyword id="KW-0464">Manganese</keyword>
<keyword id="KW-0479">Metal-binding</keyword>